<organism>
    <name type="scientific">Trichlorobacter lovleyi (strain ATCC BAA-1151 / DSM 17278 / SZ)</name>
    <name type="common">Geobacter lovleyi</name>
    <dbReference type="NCBI Taxonomy" id="398767"/>
    <lineage>
        <taxon>Bacteria</taxon>
        <taxon>Pseudomonadati</taxon>
        <taxon>Thermodesulfobacteriota</taxon>
        <taxon>Desulfuromonadia</taxon>
        <taxon>Geobacterales</taxon>
        <taxon>Geobacteraceae</taxon>
        <taxon>Trichlorobacter</taxon>
    </lineage>
</organism>
<protein>
    <recommendedName>
        <fullName evidence="1">ATP synthase subunit c</fullName>
    </recommendedName>
    <alternativeName>
        <fullName evidence="1">ATP synthase F(0) sector subunit c</fullName>
    </alternativeName>
    <alternativeName>
        <fullName evidence="1">F-type ATPase subunit c</fullName>
        <shortName evidence="1">F-ATPase subunit c</shortName>
    </alternativeName>
    <alternativeName>
        <fullName evidence="1">Lipid-binding protein</fullName>
    </alternativeName>
</protein>
<evidence type="ECO:0000255" key="1">
    <source>
        <dbReference type="HAMAP-Rule" id="MF_01396"/>
    </source>
</evidence>
<feature type="chain" id="PRO_5000374624" description="ATP synthase subunit c">
    <location>
        <begin position="1"/>
        <end position="91"/>
    </location>
</feature>
<feature type="transmembrane region" description="Helical" evidence="1">
    <location>
        <begin position="4"/>
        <end position="24"/>
    </location>
</feature>
<feature type="transmembrane region" description="Helical" evidence="1">
    <location>
        <begin position="53"/>
        <end position="73"/>
    </location>
</feature>
<feature type="site" description="Reversibly protonated during proton transport" evidence="1">
    <location>
        <position position="59"/>
    </location>
</feature>
<dbReference type="EMBL" id="CP001089">
    <property type="protein sequence ID" value="ACD96849.1"/>
    <property type="molecule type" value="Genomic_DNA"/>
</dbReference>
<dbReference type="RefSeq" id="WP_012471173.1">
    <property type="nucleotide sequence ID" value="NC_010814.1"/>
</dbReference>
<dbReference type="SMR" id="B3E9X4"/>
<dbReference type="STRING" id="398767.Glov_3143"/>
<dbReference type="KEGG" id="glo:Glov_3143"/>
<dbReference type="eggNOG" id="COG0636">
    <property type="taxonomic scope" value="Bacteria"/>
</dbReference>
<dbReference type="HOGENOM" id="CLU_148047_2_0_7"/>
<dbReference type="OrthoDB" id="5296711at2"/>
<dbReference type="Proteomes" id="UP000002420">
    <property type="component" value="Chromosome"/>
</dbReference>
<dbReference type="GO" id="GO:0005886">
    <property type="term" value="C:plasma membrane"/>
    <property type="evidence" value="ECO:0007669"/>
    <property type="project" value="UniProtKB-SubCell"/>
</dbReference>
<dbReference type="GO" id="GO:0045259">
    <property type="term" value="C:proton-transporting ATP synthase complex"/>
    <property type="evidence" value="ECO:0007669"/>
    <property type="project" value="UniProtKB-KW"/>
</dbReference>
<dbReference type="GO" id="GO:0033177">
    <property type="term" value="C:proton-transporting two-sector ATPase complex, proton-transporting domain"/>
    <property type="evidence" value="ECO:0007669"/>
    <property type="project" value="InterPro"/>
</dbReference>
<dbReference type="GO" id="GO:0008289">
    <property type="term" value="F:lipid binding"/>
    <property type="evidence" value="ECO:0007669"/>
    <property type="project" value="UniProtKB-KW"/>
</dbReference>
<dbReference type="GO" id="GO:0046933">
    <property type="term" value="F:proton-transporting ATP synthase activity, rotational mechanism"/>
    <property type="evidence" value="ECO:0007669"/>
    <property type="project" value="UniProtKB-UniRule"/>
</dbReference>
<dbReference type="CDD" id="cd18121">
    <property type="entry name" value="ATP-synt_Fo_c"/>
    <property type="match status" value="1"/>
</dbReference>
<dbReference type="FunFam" id="1.20.120.610:FF:000006">
    <property type="entry name" value="ATP synthase subunit c"/>
    <property type="match status" value="1"/>
</dbReference>
<dbReference type="Gene3D" id="1.20.120.610">
    <property type="entry name" value="lithium bound rotor ring of v- atpase"/>
    <property type="match status" value="1"/>
</dbReference>
<dbReference type="HAMAP" id="MF_01396">
    <property type="entry name" value="ATP_synth_c_bact"/>
    <property type="match status" value="1"/>
</dbReference>
<dbReference type="InterPro" id="IPR005953">
    <property type="entry name" value="ATP_synth_csu_bac/chlpt"/>
</dbReference>
<dbReference type="InterPro" id="IPR000454">
    <property type="entry name" value="ATP_synth_F0_csu"/>
</dbReference>
<dbReference type="InterPro" id="IPR020537">
    <property type="entry name" value="ATP_synth_F0_csu_DDCD_BS"/>
</dbReference>
<dbReference type="InterPro" id="IPR002379">
    <property type="entry name" value="ATPase_proteolipid_c-like_dom"/>
</dbReference>
<dbReference type="InterPro" id="IPR035921">
    <property type="entry name" value="F/V-ATP_Csub_sf"/>
</dbReference>
<dbReference type="NCBIfam" id="TIGR01260">
    <property type="entry name" value="ATP_synt_c"/>
    <property type="match status" value="1"/>
</dbReference>
<dbReference type="PANTHER" id="PTHR10031">
    <property type="entry name" value="ATP SYNTHASE LIPID-BINDING PROTEIN, MITOCHONDRIAL"/>
    <property type="match status" value="1"/>
</dbReference>
<dbReference type="PANTHER" id="PTHR10031:SF0">
    <property type="entry name" value="ATPASE PROTEIN 9"/>
    <property type="match status" value="1"/>
</dbReference>
<dbReference type="Pfam" id="PF00137">
    <property type="entry name" value="ATP-synt_C"/>
    <property type="match status" value="1"/>
</dbReference>
<dbReference type="PRINTS" id="PR00124">
    <property type="entry name" value="ATPASEC"/>
</dbReference>
<dbReference type="SUPFAM" id="SSF81333">
    <property type="entry name" value="F1F0 ATP synthase subunit C"/>
    <property type="match status" value="1"/>
</dbReference>
<dbReference type="PROSITE" id="PS00605">
    <property type="entry name" value="ATPASE_C"/>
    <property type="match status" value="1"/>
</dbReference>
<gene>
    <name evidence="1" type="primary">atpE</name>
    <name type="ordered locus">Glov_3143</name>
</gene>
<comment type="function">
    <text evidence="1">F(1)F(0) ATP synthase produces ATP from ADP in the presence of a proton or sodium gradient. F-type ATPases consist of two structural domains, F(1) containing the extramembraneous catalytic core and F(0) containing the membrane proton channel, linked together by a central stalk and a peripheral stalk. During catalysis, ATP synthesis in the catalytic domain of F(1) is coupled via a rotary mechanism of the central stalk subunits to proton translocation.</text>
</comment>
<comment type="function">
    <text evidence="1">Key component of the F(0) channel; it plays a direct role in translocation across the membrane. A homomeric c-ring of between 10-14 subunits forms the central stalk rotor element with the F(1) delta and epsilon subunits.</text>
</comment>
<comment type="subunit">
    <text evidence="1">F-type ATPases have 2 components, F(1) - the catalytic core - and F(0) - the membrane proton channel. F(1) has five subunits: alpha(3), beta(3), gamma(1), delta(1), epsilon(1). F(0) has three main subunits: a(1), b(2) and c(10-14). The alpha and beta chains form an alternating ring which encloses part of the gamma chain. F(1) is attached to F(0) by a central stalk formed by the gamma and epsilon chains, while a peripheral stalk is formed by the delta and b chains.</text>
</comment>
<comment type="subcellular location">
    <subcellularLocation>
        <location evidence="1">Cell inner membrane</location>
        <topology evidence="1">Multi-pass membrane protein</topology>
    </subcellularLocation>
</comment>
<comment type="similarity">
    <text evidence="1">Belongs to the ATPase C chain family.</text>
</comment>
<accession>B3E9X4</accession>
<name>ATPL_TRIL1</name>
<reference key="1">
    <citation type="submission" date="2008-05" db="EMBL/GenBank/DDBJ databases">
        <title>Complete sequence of chromosome of Geobacter lovleyi SZ.</title>
        <authorList>
            <consortium name="US DOE Joint Genome Institute"/>
            <person name="Lucas S."/>
            <person name="Copeland A."/>
            <person name="Lapidus A."/>
            <person name="Glavina del Rio T."/>
            <person name="Dalin E."/>
            <person name="Tice H."/>
            <person name="Bruce D."/>
            <person name="Goodwin L."/>
            <person name="Pitluck S."/>
            <person name="Chertkov O."/>
            <person name="Meincke L."/>
            <person name="Brettin T."/>
            <person name="Detter J.C."/>
            <person name="Han C."/>
            <person name="Tapia R."/>
            <person name="Kuske C.R."/>
            <person name="Schmutz J."/>
            <person name="Larimer F."/>
            <person name="Land M."/>
            <person name="Hauser L."/>
            <person name="Kyrpides N."/>
            <person name="Mikhailova N."/>
            <person name="Sung Y."/>
            <person name="Fletcher K.E."/>
            <person name="Ritalahti K.M."/>
            <person name="Loeffler F.E."/>
            <person name="Richardson P."/>
        </authorList>
    </citation>
    <scope>NUCLEOTIDE SEQUENCE [LARGE SCALE GENOMIC DNA]</scope>
    <source>
        <strain>ATCC BAA-1151 / DSM 17278 / SZ</strain>
    </source>
</reference>
<sequence>MNFFTMCMLAAGFGMAIGAFGTGIGQGLAVKSAVEGVSRNPGASGKILTTMMIGLAMIESLAIYVLVVCLIILFANPYKDVAIKALETVAK</sequence>
<keyword id="KW-0066">ATP synthesis</keyword>
<keyword id="KW-0997">Cell inner membrane</keyword>
<keyword id="KW-1003">Cell membrane</keyword>
<keyword id="KW-0138">CF(0)</keyword>
<keyword id="KW-0375">Hydrogen ion transport</keyword>
<keyword id="KW-0406">Ion transport</keyword>
<keyword id="KW-0446">Lipid-binding</keyword>
<keyword id="KW-0472">Membrane</keyword>
<keyword id="KW-1185">Reference proteome</keyword>
<keyword id="KW-0812">Transmembrane</keyword>
<keyword id="KW-1133">Transmembrane helix</keyword>
<keyword id="KW-0813">Transport</keyword>
<proteinExistence type="inferred from homology"/>